<accession>Q8BPC6</accession>
<keyword id="KW-0067">ATP-binding</keyword>
<keyword id="KW-0460">Magnesium</keyword>
<keyword id="KW-0464">Manganese</keyword>
<keyword id="KW-0479">Metal-binding</keyword>
<keyword id="KW-0496">Mitochondrion</keyword>
<keyword id="KW-0547">Nucleotide-binding</keyword>
<keyword id="KW-1185">Reference proteome</keyword>
<keyword id="KW-0809">Transit peptide</keyword>
<keyword id="KW-0816">Tricarboxylic acid cycle</keyword>
<reference key="1">
    <citation type="journal article" date="2005" name="Science">
        <title>The transcriptional landscape of the mammalian genome.</title>
        <authorList>
            <person name="Carninci P."/>
            <person name="Kasukawa T."/>
            <person name="Katayama S."/>
            <person name="Gough J."/>
            <person name="Frith M.C."/>
            <person name="Maeda N."/>
            <person name="Oyama R."/>
            <person name="Ravasi T."/>
            <person name="Lenhard B."/>
            <person name="Wells C."/>
            <person name="Kodzius R."/>
            <person name="Shimokawa K."/>
            <person name="Bajic V.B."/>
            <person name="Brenner S.E."/>
            <person name="Batalov S."/>
            <person name="Forrest A.R."/>
            <person name="Zavolan M."/>
            <person name="Davis M.J."/>
            <person name="Wilming L.G."/>
            <person name="Aidinis V."/>
            <person name="Allen J.E."/>
            <person name="Ambesi-Impiombato A."/>
            <person name="Apweiler R."/>
            <person name="Aturaliya R.N."/>
            <person name="Bailey T.L."/>
            <person name="Bansal M."/>
            <person name="Baxter L."/>
            <person name="Beisel K.W."/>
            <person name="Bersano T."/>
            <person name="Bono H."/>
            <person name="Chalk A.M."/>
            <person name="Chiu K.P."/>
            <person name="Choudhary V."/>
            <person name="Christoffels A."/>
            <person name="Clutterbuck D.R."/>
            <person name="Crowe M.L."/>
            <person name="Dalla E."/>
            <person name="Dalrymple B.P."/>
            <person name="de Bono B."/>
            <person name="Della Gatta G."/>
            <person name="di Bernardo D."/>
            <person name="Down T."/>
            <person name="Engstrom P."/>
            <person name="Fagiolini M."/>
            <person name="Faulkner G."/>
            <person name="Fletcher C.F."/>
            <person name="Fukushima T."/>
            <person name="Furuno M."/>
            <person name="Futaki S."/>
            <person name="Gariboldi M."/>
            <person name="Georgii-Hemming P."/>
            <person name="Gingeras T.R."/>
            <person name="Gojobori T."/>
            <person name="Green R.E."/>
            <person name="Gustincich S."/>
            <person name="Harbers M."/>
            <person name="Hayashi Y."/>
            <person name="Hensch T.K."/>
            <person name="Hirokawa N."/>
            <person name="Hill D."/>
            <person name="Huminiecki L."/>
            <person name="Iacono M."/>
            <person name="Ikeo K."/>
            <person name="Iwama A."/>
            <person name="Ishikawa T."/>
            <person name="Jakt M."/>
            <person name="Kanapin A."/>
            <person name="Katoh M."/>
            <person name="Kawasawa Y."/>
            <person name="Kelso J."/>
            <person name="Kitamura H."/>
            <person name="Kitano H."/>
            <person name="Kollias G."/>
            <person name="Krishnan S.P."/>
            <person name="Kruger A."/>
            <person name="Kummerfeld S.K."/>
            <person name="Kurochkin I.V."/>
            <person name="Lareau L.F."/>
            <person name="Lazarevic D."/>
            <person name="Lipovich L."/>
            <person name="Liu J."/>
            <person name="Liuni S."/>
            <person name="McWilliam S."/>
            <person name="Madan Babu M."/>
            <person name="Madera M."/>
            <person name="Marchionni L."/>
            <person name="Matsuda H."/>
            <person name="Matsuzawa S."/>
            <person name="Miki H."/>
            <person name="Mignone F."/>
            <person name="Miyake S."/>
            <person name="Morris K."/>
            <person name="Mottagui-Tabar S."/>
            <person name="Mulder N."/>
            <person name="Nakano N."/>
            <person name="Nakauchi H."/>
            <person name="Ng P."/>
            <person name="Nilsson R."/>
            <person name="Nishiguchi S."/>
            <person name="Nishikawa S."/>
            <person name="Nori F."/>
            <person name="Ohara O."/>
            <person name="Okazaki Y."/>
            <person name="Orlando V."/>
            <person name="Pang K.C."/>
            <person name="Pavan W.J."/>
            <person name="Pavesi G."/>
            <person name="Pesole G."/>
            <person name="Petrovsky N."/>
            <person name="Piazza S."/>
            <person name="Reed J."/>
            <person name="Reid J.F."/>
            <person name="Ring B.Z."/>
            <person name="Ringwald M."/>
            <person name="Rost B."/>
            <person name="Ruan Y."/>
            <person name="Salzberg S.L."/>
            <person name="Sandelin A."/>
            <person name="Schneider C."/>
            <person name="Schoenbach C."/>
            <person name="Sekiguchi K."/>
            <person name="Semple C.A."/>
            <person name="Seno S."/>
            <person name="Sessa L."/>
            <person name="Sheng Y."/>
            <person name="Shibata Y."/>
            <person name="Shimada H."/>
            <person name="Shimada K."/>
            <person name="Silva D."/>
            <person name="Sinclair B."/>
            <person name="Sperling S."/>
            <person name="Stupka E."/>
            <person name="Sugiura K."/>
            <person name="Sultana R."/>
            <person name="Takenaka Y."/>
            <person name="Taki K."/>
            <person name="Tammoja K."/>
            <person name="Tan S.L."/>
            <person name="Tang S."/>
            <person name="Taylor M.S."/>
            <person name="Tegner J."/>
            <person name="Teichmann S.A."/>
            <person name="Ueda H.R."/>
            <person name="van Nimwegen E."/>
            <person name="Verardo R."/>
            <person name="Wei C.L."/>
            <person name="Yagi K."/>
            <person name="Yamanishi H."/>
            <person name="Zabarovsky E."/>
            <person name="Zhu S."/>
            <person name="Zimmer A."/>
            <person name="Hide W."/>
            <person name="Bult C."/>
            <person name="Grimmond S.M."/>
            <person name="Teasdale R.D."/>
            <person name="Liu E.T."/>
            <person name="Brusic V."/>
            <person name="Quackenbush J."/>
            <person name="Wahlestedt C."/>
            <person name="Mattick J.S."/>
            <person name="Hume D.A."/>
            <person name="Kai C."/>
            <person name="Sasaki D."/>
            <person name="Tomaru Y."/>
            <person name="Fukuda S."/>
            <person name="Kanamori-Katayama M."/>
            <person name="Suzuki M."/>
            <person name="Aoki J."/>
            <person name="Arakawa T."/>
            <person name="Iida J."/>
            <person name="Imamura K."/>
            <person name="Itoh M."/>
            <person name="Kato T."/>
            <person name="Kawaji H."/>
            <person name="Kawagashira N."/>
            <person name="Kawashima T."/>
            <person name="Kojima M."/>
            <person name="Kondo S."/>
            <person name="Konno H."/>
            <person name="Nakano K."/>
            <person name="Ninomiya N."/>
            <person name="Nishio T."/>
            <person name="Okada M."/>
            <person name="Plessy C."/>
            <person name="Shibata K."/>
            <person name="Shiraki T."/>
            <person name="Suzuki S."/>
            <person name="Tagami M."/>
            <person name="Waki K."/>
            <person name="Watahiki A."/>
            <person name="Okamura-Oho Y."/>
            <person name="Suzuki H."/>
            <person name="Kawai J."/>
            <person name="Hayashizaki Y."/>
        </authorList>
    </citation>
    <scope>NUCLEOTIDE SEQUENCE [LARGE SCALE MRNA]</scope>
    <source>
        <strain>C57BL/6J</strain>
        <tissue>Testis</tissue>
    </source>
</reference>
<reference key="2">
    <citation type="submission" date="2005-07" db="EMBL/GenBank/DDBJ databases">
        <authorList>
            <person name="Mural R.J."/>
            <person name="Adams M.D."/>
            <person name="Myers E.W."/>
            <person name="Smith H.O."/>
            <person name="Venter J.C."/>
        </authorList>
    </citation>
    <scope>NUCLEOTIDE SEQUENCE [LARGE SCALE GENOMIC DNA]</scope>
</reference>
<reference key="3">
    <citation type="journal article" date="2004" name="Genome Res.">
        <title>The status, quality, and expansion of the NIH full-length cDNA project: the Mammalian Gene Collection (MGC).</title>
        <authorList>
            <consortium name="The MGC Project Team"/>
        </authorList>
    </citation>
    <scope>NUCLEOTIDE SEQUENCE [LARGE SCALE MRNA]</scope>
    <source>
        <tissue>Testis</tissue>
    </source>
</reference>
<reference key="4">
    <citation type="journal article" date="2008" name="Cell">
        <title>A mitochondrial protein compendium elucidates complex I disease biology.</title>
        <authorList>
            <person name="Pagliarini D.J."/>
            <person name="Calvo S.E."/>
            <person name="Chang B."/>
            <person name="Sheth S.A."/>
            <person name="Vafai S.B."/>
            <person name="Ong S.E."/>
            <person name="Walford G.A."/>
            <person name="Sugiana C."/>
            <person name="Boneh A."/>
            <person name="Chen W.K."/>
            <person name="Hill D.E."/>
            <person name="Vidal M."/>
            <person name="Evans J.G."/>
            <person name="Thorburn D.R."/>
            <person name="Carr S.A."/>
            <person name="Mootha V.K."/>
        </authorList>
    </citation>
    <scope>SUBCELLULAR LOCATION [LARGE SCALE ANALYSIS]</scope>
</reference>
<name>IDHG2_MOUSE</name>
<feature type="transit peptide" description="Mitochondrion" evidence="2">
    <location>
        <begin position="1"/>
        <end position="25"/>
    </location>
</feature>
<feature type="chain" id="PRO_0000401933" description="Probable isocitrate dehydrogenase [NAD] gamma 2, mitochondrial">
    <location>
        <begin position="26"/>
        <end position="396"/>
    </location>
</feature>
<feature type="binding site" evidence="1">
    <location>
        <position position="117"/>
    </location>
    <ligand>
        <name>citrate</name>
        <dbReference type="ChEBI" id="CHEBI:16947"/>
        <note>allosteric activator</note>
    </ligand>
</feature>
<feature type="binding site" evidence="1">
    <location>
        <position position="133"/>
    </location>
    <ligand>
        <name>substrate</name>
    </ligand>
</feature>
<feature type="binding site" evidence="1">
    <location>
        <position position="164"/>
    </location>
    <ligand>
        <name>substrate</name>
    </ligand>
</feature>
<feature type="binding site" evidence="1">
    <location>
        <position position="251"/>
    </location>
    <ligand>
        <name>Mn(2+)</name>
        <dbReference type="ChEBI" id="CHEBI:29035"/>
        <note>ligand shared with catalytic subunit</note>
    </ligand>
</feature>
<feature type="binding site" evidence="1">
    <location>
        <position position="251"/>
    </location>
    <ligand>
        <name>substrate</name>
    </ligand>
</feature>
<feature type="binding site" evidence="1">
    <location>
        <position position="321"/>
    </location>
    <ligand>
        <name>ADP</name>
        <dbReference type="ChEBI" id="CHEBI:456216"/>
        <note>allosteric activator</note>
    </ligand>
</feature>
<evidence type="ECO:0000250" key="1">
    <source>
        <dbReference type="UniProtKB" id="P51553"/>
    </source>
</evidence>
<evidence type="ECO:0000255" key="2"/>
<evidence type="ECO:0000269" key="3">
    <source>
    </source>
</evidence>
<evidence type="ECO:0000305" key="4"/>
<sequence>MLAVTSCSMKTVLQYAVFLGHSREVVCELVTSFRSFCSHCAVPPSPKYGGRHTVAMIPGDGIGPELMVHVKKIFRSNCVPVDFEEVWVTSTSNEEEINNALMAIRRNRVALKGNIATNHNLPARYKSHNTKFRTILDLYASVVHFKTFPGVMTRHKDIDILVVRENTEGEYTNLEHESVKGVVESLKIVTKTKSVRIADYAFKLAQKMGRKKVTVVHKANIMKLGDGLFLQCCKDVAAHYPQITLESMIIDNTTMQLVSKPQQFDVMVMPNLYGNIINSICTGLVGGSGIVPGANYGDSYAIFEMGSKEIGKDLAHRNIANPVAMLLTSCIMLDYLDLQPYATHIRSAVMASLQNKAVCTPDIGGQGNTASTVEYILHHMKEQTSGCHPNFFLQFT</sequence>
<organism>
    <name type="scientific">Mus musculus</name>
    <name type="common">Mouse</name>
    <dbReference type="NCBI Taxonomy" id="10090"/>
    <lineage>
        <taxon>Eukaryota</taxon>
        <taxon>Metazoa</taxon>
        <taxon>Chordata</taxon>
        <taxon>Craniata</taxon>
        <taxon>Vertebrata</taxon>
        <taxon>Euteleostomi</taxon>
        <taxon>Mammalia</taxon>
        <taxon>Eutheria</taxon>
        <taxon>Euarchontoglires</taxon>
        <taxon>Glires</taxon>
        <taxon>Rodentia</taxon>
        <taxon>Myomorpha</taxon>
        <taxon>Muroidea</taxon>
        <taxon>Muridae</taxon>
        <taxon>Murinae</taxon>
        <taxon>Mus</taxon>
        <taxon>Mus</taxon>
    </lineage>
</organism>
<comment type="function">
    <text evidence="1">Regulatory subunit which plays a role in the allosteric regulation of the enzyme catalyzing the decarboxylation of isocitrate (ICT) into alpha-ketoglutarate. The heterodimer composed of the alpha (IDH3A) and beta (IDH3B) subunits and the heterodimer composed of the alpha (IDH3A) and gamma (IDH3G) subunits, have considerable basal activity but the full activity of the heterotetramer (containing two subunits of IDH3A, one of IDH3B and one of IDH3G) requires the assembly and cooperative function of both heterodimers.</text>
</comment>
<comment type="cofactor">
    <cofactor evidence="1">
        <name>Mg(2+)</name>
        <dbReference type="ChEBI" id="CHEBI:18420"/>
    </cofactor>
    <cofactor evidence="1">
        <name>Mn(2+)</name>
        <dbReference type="ChEBI" id="CHEBI:29035"/>
    </cofactor>
    <text evidence="1">Divalent metal cations; Mn(2+) or Mg(2+). Activity higher in presence of Mn(2+) than of Mg(2+). Binds 1 Mg(2+) or Mn(2+) ion per subunit.</text>
</comment>
<comment type="activity regulation">
    <text evidence="1">The heterotetramer and the heterodimer composed of IDH3A and IDH3G subunits can be allosterically activated by citrate (CIT) or/and ADP, and the two activators can act independently or synergistically. The heterodimer composed of IDH3A and IDH3B subunits cannot be allosterically regulated and the allosteric regulation of the heterotetramer is through the IDH3G subunit and not the IDH3B subunit. The IDH3G subunit contains the allosteric site which consists of a CIT-binding site and an ADP-binding site, and the binding of CIT and ADP causes conformational changes at the allosteric site which are transmitted to the active site in the catalytic subunit (IDH3A) through a cascade of conformational changes at the heterodimer interface, leading to stabilization of the isocitrate-binding at the active site and thus activation of the enzyme. ATP can activate the heterotetramer and the heterodimer composed of IDH3A and IDH3G subunits at low concentrations but inhibits their activities at high concentrations, whereas ATP exhibits only inhibitory effect on the heterodimer composed of IDH3A and IDH3B subunits.</text>
</comment>
<comment type="subunit">
    <text evidence="1">Heterooligomer of subunits alpha (IDH3A), beta (IDH3B), and gamma (IDH3G) in the apparent ratio of 2:1:1. The heterodimer containing one IDH3A and one IDH3B subunit and the heterodimer containing one IDH3A and one IDH3G subunit assemble into a heterotetramer (which contains two subunits of IDH3A, one of IDH3B and one of IDH3G) and further into the heterooctamer.</text>
</comment>
<comment type="subcellular location">
    <subcellularLocation>
        <location evidence="3">Mitochondrion</location>
    </subcellularLocation>
</comment>
<comment type="similarity">
    <text evidence="4">Belongs to the isocitrate and isopropylmalate dehydrogenases family.</text>
</comment>
<protein>
    <recommendedName>
        <fullName>Probable isocitrate dehydrogenase [NAD] gamma 2, mitochondrial</fullName>
    </recommendedName>
    <alternativeName>
        <fullName>Isocitric dehydrogenase subunit gamma 2</fullName>
    </alternativeName>
    <alternativeName>
        <fullName>NAD(+)-specific ICDH subunit gamma 2</fullName>
    </alternativeName>
</protein>
<proteinExistence type="evidence at transcript level"/>
<dbReference type="EMBL" id="AK077105">
    <property type="protein sequence ID" value="BAC36614.1"/>
    <property type="molecule type" value="mRNA"/>
</dbReference>
<dbReference type="EMBL" id="CH466603">
    <property type="protein sequence ID" value="EDL22983.1"/>
    <property type="molecule type" value="Genomic_DNA"/>
</dbReference>
<dbReference type="EMBL" id="BC060958">
    <property type="protein sequence ID" value="AAH60958.1"/>
    <property type="molecule type" value="mRNA"/>
</dbReference>
<dbReference type="CCDS" id="CCDS71974.1"/>
<dbReference type="RefSeq" id="NP_766489.1">
    <property type="nucleotide sequence ID" value="NM_172901.2"/>
</dbReference>
<dbReference type="SMR" id="Q8BPC6"/>
<dbReference type="FunCoup" id="Q8BPC6">
    <property type="interactions" value="382"/>
</dbReference>
<dbReference type="STRING" id="10090.ENSMUSP00000138215"/>
<dbReference type="GlyGen" id="Q8BPC6">
    <property type="glycosylation" value="1 site, 1 O-linked glycan (1 site)"/>
</dbReference>
<dbReference type="iPTMnet" id="Q8BPC6"/>
<dbReference type="SwissPalm" id="Q8BPC6"/>
<dbReference type="PaxDb" id="10090-ENSMUSP00000138215"/>
<dbReference type="PeptideAtlas" id="Q8BPC6"/>
<dbReference type="Ensembl" id="ENSMUST00000119710.3">
    <property type="protein sequence ID" value="ENSMUSP00000138215.2"/>
    <property type="gene ID" value="ENSMUSG00000084234.3"/>
</dbReference>
<dbReference type="GeneID" id="243996"/>
<dbReference type="KEGG" id="mmu:243996"/>
<dbReference type="UCSC" id="uc009hca.1">
    <property type="organism name" value="mouse"/>
</dbReference>
<dbReference type="AGR" id="MGI:2142174"/>
<dbReference type="MGI" id="MGI:2142174">
    <property type="gene designation" value="4933405O20Rik"/>
</dbReference>
<dbReference type="VEuPathDB" id="HostDB:ENSMUSG00000084234"/>
<dbReference type="eggNOG" id="KOG0784">
    <property type="taxonomic scope" value="Eukaryota"/>
</dbReference>
<dbReference type="GeneTree" id="ENSGT00950000182989"/>
<dbReference type="HOGENOM" id="CLU_031953_0_0_1"/>
<dbReference type="InParanoid" id="Q8BPC6"/>
<dbReference type="OMA" id="DGVHTYD"/>
<dbReference type="OrthoDB" id="10261637at2759"/>
<dbReference type="PhylomeDB" id="Q8BPC6"/>
<dbReference type="BioGRID-ORCS" id="243996">
    <property type="hits" value="0 hits in 71 CRISPR screens"/>
</dbReference>
<dbReference type="PRO" id="PR:Q8BPC6"/>
<dbReference type="Proteomes" id="UP000000589">
    <property type="component" value="Chromosome 7"/>
</dbReference>
<dbReference type="RNAct" id="Q8BPC6">
    <property type="molecule type" value="protein"/>
</dbReference>
<dbReference type="Bgee" id="ENSMUSG00000084234">
    <property type="expression patterns" value="Expressed in spermatid and 4 other cell types or tissues"/>
</dbReference>
<dbReference type="GO" id="GO:0005739">
    <property type="term" value="C:mitochondrion"/>
    <property type="evidence" value="ECO:0007005"/>
    <property type="project" value="MGI"/>
</dbReference>
<dbReference type="GO" id="GO:0005524">
    <property type="term" value="F:ATP binding"/>
    <property type="evidence" value="ECO:0007669"/>
    <property type="project" value="UniProtKB-KW"/>
</dbReference>
<dbReference type="GO" id="GO:0000287">
    <property type="term" value="F:magnesium ion binding"/>
    <property type="evidence" value="ECO:0000250"/>
    <property type="project" value="UniProtKB"/>
</dbReference>
<dbReference type="GO" id="GO:0006099">
    <property type="term" value="P:tricarboxylic acid cycle"/>
    <property type="evidence" value="ECO:0007669"/>
    <property type="project" value="UniProtKB-KW"/>
</dbReference>
<dbReference type="FunFam" id="3.40.718.10:FF:000001">
    <property type="entry name" value="Isocitrate dehydrogenase [NAD] subunit, mitochondrial"/>
    <property type="match status" value="1"/>
</dbReference>
<dbReference type="Gene3D" id="3.40.718.10">
    <property type="entry name" value="Isopropylmalate Dehydrogenase"/>
    <property type="match status" value="1"/>
</dbReference>
<dbReference type="InterPro" id="IPR004434">
    <property type="entry name" value="Isocitrate_DH_NAD"/>
</dbReference>
<dbReference type="InterPro" id="IPR024084">
    <property type="entry name" value="IsoPropMal-DH-like_dom"/>
</dbReference>
<dbReference type="NCBIfam" id="TIGR00175">
    <property type="entry name" value="mito_nad_idh"/>
    <property type="match status" value="1"/>
</dbReference>
<dbReference type="PANTHER" id="PTHR11835">
    <property type="entry name" value="DECARBOXYLATING DEHYDROGENASES-ISOCITRATE, ISOPROPYLMALATE, TARTRATE"/>
    <property type="match status" value="1"/>
</dbReference>
<dbReference type="PANTHER" id="PTHR11835:SF54">
    <property type="entry name" value="ISOCITRATE DEHYDROGENASE [NAD] GAMMA 2, MITOCHONDRIAL-RELATED"/>
    <property type="match status" value="1"/>
</dbReference>
<dbReference type="Pfam" id="PF00180">
    <property type="entry name" value="Iso_dh"/>
    <property type="match status" value="1"/>
</dbReference>
<dbReference type="SMART" id="SM01329">
    <property type="entry name" value="Iso_dh"/>
    <property type="match status" value="1"/>
</dbReference>
<dbReference type="SUPFAM" id="SSF53659">
    <property type="entry name" value="Isocitrate/Isopropylmalate dehydrogenase-like"/>
    <property type="match status" value="1"/>
</dbReference>